<reference key="1">
    <citation type="journal article" date="2007" name="PLoS Genet.">
        <title>A tale of two oxidation states: bacterial colonization of arsenic-rich environments.</title>
        <authorList>
            <person name="Muller D."/>
            <person name="Medigue C."/>
            <person name="Koechler S."/>
            <person name="Barbe V."/>
            <person name="Barakat M."/>
            <person name="Talla E."/>
            <person name="Bonnefoy V."/>
            <person name="Krin E."/>
            <person name="Arsene-Ploetze F."/>
            <person name="Carapito C."/>
            <person name="Chandler M."/>
            <person name="Cournoyer B."/>
            <person name="Cruveiller S."/>
            <person name="Dossat C."/>
            <person name="Duval S."/>
            <person name="Heymann M."/>
            <person name="Leize E."/>
            <person name="Lieutaud A."/>
            <person name="Lievremont D."/>
            <person name="Makita Y."/>
            <person name="Mangenot S."/>
            <person name="Nitschke W."/>
            <person name="Ortet P."/>
            <person name="Perdrial N."/>
            <person name="Schoepp B."/>
            <person name="Siguier P."/>
            <person name="Simeonova D.D."/>
            <person name="Rouy Z."/>
            <person name="Segurens B."/>
            <person name="Turlin E."/>
            <person name="Vallenet D."/>
            <person name="van Dorsselaer A."/>
            <person name="Weiss S."/>
            <person name="Weissenbach J."/>
            <person name="Lett M.-C."/>
            <person name="Danchin A."/>
            <person name="Bertin P.N."/>
        </authorList>
    </citation>
    <scope>NUCLEOTIDE SEQUENCE [LARGE SCALE GENOMIC DNA]</scope>
    <source>
        <strain>ULPAs1</strain>
    </source>
</reference>
<accession>A4G2T8</accession>
<gene>
    <name evidence="1" type="primary">rplS</name>
    <name type="ordered locus">HEAR0626</name>
</gene>
<proteinExistence type="inferred from homology"/>
<name>RL19_HERAR</name>
<protein>
    <recommendedName>
        <fullName evidence="1">Large ribosomal subunit protein bL19</fullName>
    </recommendedName>
    <alternativeName>
        <fullName evidence="2">50S ribosomal protein L19</fullName>
    </alternativeName>
</protein>
<organism>
    <name type="scientific">Herminiimonas arsenicoxydans</name>
    <dbReference type="NCBI Taxonomy" id="204773"/>
    <lineage>
        <taxon>Bacteria</taxon>
        <taxon>Pseudomonadati</taxon>
        <taxon>Pseudomonadota</taxon>
        <taxon>Betaproteobacteria</taxon>
        <taxon>Burkholderiales</taxon>
        <taxon>Oxalobacteraceae</taxon>
        <taxon>Herminiimonas</taxon>
    </lineage>
</organism>
<comment type="function">
    <text evidence="1">This protein is located at the 30S-50S ribosomal subunit interface and may play a role in the structure and function of the aminoacyl-tRNA binding site.</text>
</comment>
<comment type="similarity">
    <text evidence="1">Belongs to the bacterial ribosomal protein bL19 family.</text>
</comment>
<sequence length="128" mass="14512">MDLIQTLEQEEIARLAKNIPDFAPGDTVIVNVNVVEGTRKRAQAYEGVVISRRNRGLNSNFIVRKISSGEGVERTFQLYSPLIASIEVKRRGDVRRAKLYYLRERSGKSARIKEKLPQRRVVSKAAAE</sequence>
<feature type="chain" id="PRO_1000049687" description="Large ribosomal subunit protein bL19">
    <location>
        <begin position="1"/>
        <end position="128"/>
    </location>
</feature>
<keyword id="KW-1185">Reference proteome</keyword>
<keyword id="KW-0687">Ribonucleoprotein</keyword>
<keyword id="KW-0689">Ribosomal protein</keyword>
<dbReference type="EMBL" id="CU207211">
    <property type="protein sequence ID" value="CAL60825.1"/>
    <property type="molecule type" value="Genomic_DNA"/>
</dbReference>
<dbReference type="SMR" id="A4G2T8"/>
<dbReference type="STRING" id="204773.HEAR0626"/>
<dbReference type="KEGG" id="har:HEAR0626"/>
<dbReference type="eggNOG" id="COG0335">
    <property type="taxonomic scope" value="Bacteria"/>
</dbReference>
<dbReference type="HOGENOM" id="CLU_103507_1_0_4"/>
<dbReference type="OrthoDB" id="9803541at2"/>
<dbReference type="Proteomes" id="UP000006697">
    <property type="component" value="Chromosome"/>
</dbReference>
<dbReference type="GO" id="GO:0022625">
    <property type="term" value="C:cytosolic large ribosomal subunit"/>
    <property type="evidence" value="ECO:0007669"/>
    <property type="project" value="TreeGrafter"/>
</dbReference>
<dbReference type="GO" id="GO:0003735">
    <property type="term" value="F:structural constituent of ribosome"/>
    <property type="evidence" value="ECO:0007669"/>
    <property type="project" value="InterPro"/>
</dbReference>
<dbReference type="GO" id="GO:0006412">
    <property type="term" value="P:translation"/>
    <property type="evidence" value="ECO:0007669"/>
    <property type="project" value="UniProtKB-UniRule"/>
</dbReference>
<dbReference type="FunFam" id="2.30.30.790:FF:000001">
    <property type="entry name" value="50S ribosomal protein L19"/>
    <property type="match status" value="1"/>
</dbReference>
<dbReference type="Gene3D" id="2.30.30.790">
    <property type="match status" value="1"/>
</dbReference>
<dbReference type="HAMAP" id="MF_00402">
    <property type="entry name" value="Ribosomal_bL19"/>
    <property type="match status" value="1"/>
</dbReference>
<dbReference type="InterPro" id="IPR001857">
    <property type="entry name" value="Ribosomal_bL19"/>
</dbReference>
<dbReference type="InterPro" id="IPR018257">
    <property type="entry name" value="Ribosomal_bL19_CS"/>
</dbReference>
<dbReference type="InterPro" id="IPR038657">
    <property type="entry name" value="Ribosomal_bL19_sf"/>
</dbReference>
<dbReference type="InterPro" id="IPR008991">
    <property type="entry name" value="Translation_prot_SH3-like_sf"/>
</dbReference>
<dbReference type="NCBIfam" id="TIGR01024">
    <property type="entry name" value="rplS_bact"/>
    <property type="match status" value="1"/>
</dbReference>
<dbReference type="PANTHER" id="PTHR15680:SF9">
    <property type="entry name" value="LARGE RIBOSOMAL SUBUNIT PROTEIN BL19M"/>
    <property type="match status" value="1"/>
</dbReference>
<dbReference type="PANTHER" id="PTHR15680">
    <property type="entry name" value="RIBOSOMAL PROTEIN L19"/>
    <property type="match status" value="1"/>
</dbReference>
<dbReference type="Pfam" id="PF01245">
    <property type="entry name" value="Ribosomal_L19"/>
    <property type="match status" value="1"/>
</dbReference>
<dbReference type="PIRSF" id="PIRSF002191">
    <property type="entry name" value="Ribosomal_L19"/>
    <property type="match status" value="1"/>
</dbReference>
<dbReference type="PRINTS" id="PR00061">
    <property type="entry name" value="RIBOSOMALL19"/>
</dbReference>
<dbReference type="SUPFAM" id="SSF50104">
    <property type="entry name" value="Translation proteins SH3-like domain"/>
    <property type="match status" value="1"/>
</dbReference>
<dbReference type="PROSITE" id="PS01015">
    <property type="entry name" value="RIBOSOMAL_L19"/>
    <property type="match status" value="1"/>
</dbReference>
<evidence type="ECO:0000255" key="1">
    <source>
        <dbReference type="HAMAP-Rule" id="MF_00402"/>
    </source>
</evidence>
<evidence type="ECO:0000305" key="2"/>